<feature type="chain" id="PRO_0000060180" description="Spermidine/putrescine transport system permease protein PotB homolog">
    <location>
        <begin position="1"/>
        <end position="286"/>
    </location>
</feature>
<feature type="transmembrane region" description="Helical" evidence="2">
    <location>
        <begin position="10"/>
        <end position="30"/>
    </location>
</feature>
<feature type="transmembrane region" description="Helical" evidence="2">
    <location>
        <begin position="62"/>
        <end position="82"/>
    </location>
</feature>
<feature type="transmembrane region" description="Helical" evidence="2">
    <location>
        <begin position="94"/>
        <end position="114"/>
    </location>
</feature>
<feature type="transmembrane region" description="Helical" evidence="2">
    <location>
        <begin position="136"/>
        <end position="156"/>
    </location>
</feature>
<feature type="transmembrane region" description="Helical" evidence="2">
    <location>
        <begin position="193"/>
        <end position="213"/>
    </location>
</feature>
<feature type="transmembrane region" description="Helical" evidence="2">
    <location>
        <begin position="248"/>
        <end position="268"/>
    </location>
</feature>
<feature type="domain" description="ABC transmembrane type-1" evidence="2">
    <location>
        <begin position="58"/>
        <end position="264"/>
    </location>
</feature>
<evidence type="ECO:0000250" key="1"/>
<evidence type="ECO:0000255" key="2">
    <source>
        <dbReference type="PROSITE-ProRule" id="PRU00441"/>
    </source>
</evidence>
<evidence type="ECO:0000305" key="3"/>
<dbReference type="EMBL" id="U00089">
    <property type="protein sequence ID" value="AAB95746.1"/>
    <property type="molecule type" value="Genomic_DNA"/>
</dbReference>
<dbReference type="PIR" id="S73424">
    <property type="entry name" value="S73424"/>
</dbReference>
<dbReference type="RefSeq" id="NP_109744.1">
    <property type="nucleotide sequence ID" value="NC_000912.1"/>
</dbReference>
<dbReference type="RefSeq" id="WP_010874413.1">
    <property type="nucleotide sequence ID" value="NZ_OU342337.1"/>
</dbReference>
<dbReference type="SMR" id="P75058"/>
<dbReference type="STRING" id="272634.MPN_056"/>
<dbReference type="EnsemblBacteria" id="AAB95746">
    <property type="protein sequence ID" value="AAB95746"/>
    <property type="gene ID" value="MPN_056"/>
</dbReference>
<dbReference type="KEGG" id="mpn:MPN_056"/>
<dbReference type="PATRIC" id="fig|272634.6.peg.56"/>
<dbReference type="HOGENOM" id="CLU_016047_18_8_14"/>
<dbReference type="OrthoDB" id="9807047at2"/>
<dbReference type="BioCyc" id="MPNE272634:G1GJ3-90-MONOMER"/>
<dbReference type="Proteomes" id="UP000000808">
    <property type="component" value="Chromosome"/>
</dbReference>
<dbReference type="GO" id="GO:0005886">
    <property type="term" value="C:plasma membrane"/>
    <property type="evidence" value="ECO:0007669"/>
    <property type="project" value="UniProtKB-SubCell"/>
</dbReference>
<dbReference type="GO" id="GO:0055085">
    <property type="term" value="P:transmembrane transport"/>
    <property type="evidence" value="ECO:0007669"/>
    <property type="project" value="InterPro"/>
</dbReference>
<dbReference type="CDD" id="cd06261">
    <property type="entry name" value="TM_PBP2"/>
    <property type="match status" value="1"/>
</dbReference>
<dbReference type="Gene3D" id="1.10.3720.10">
    <property type="entry name" value="MetI-like"/>
    <property type="match status" value="1"/>
</dbReference>
<dbReference type="InterPro" id="IPR000515">
    <property type="entry name" value="MetI-like"/>
</dbReference>
<dbReference type="InterPro" id="IPR035906">
    <property type="entry name" value="MetI-like_sf"/>
</dbReference>
<dbReference type="PANTHER" id="PTHR42929:SF1">
    <property type="entry name" value="INNER MEMBRANE ABC TRANSPORTER PERMEASE PROTEIN YDCU-RELATED"/>
    <property type="match status" value="1"/>
</dbReference>
<dbReference type="PANTHER" id="PTHR42929">
    <property type="entry name" value="INNER MEMBRANE ABC TRANSPORTER PERMEASE PROTEIN YDCU-RELATED-RELATED"/>
    <property type="match status" value="1"/>
</dbReference>
<dbReference type="Pfam" id="PF00528">
    <property type="entry name" value="BPD_transp_1"/>
    <property type="match status" value="1"/>
</dbReference>
<dbReference type="SUPFAM" id="SSF161098">
    <property type="entry name" value="MetI-like"/>
    <property type="match status" value="1"/>
</dbReference>
<dbReference type="PROSITE" id="PS50928">
    <property type="entry name" value="ABC_TM1"/>
    <property type="match status" value="1"/>
</dbReference>
<gene>
    <name type="primary">potB</name>
    <name type="ordered locus">MPN_056</name>
    <name type="ORF">MP098</name>
</gene>
<sequence length="286" mass="31936">MKLSKKYLLAVPFFVLMVIFFVVPMAWIIVSGLQNENGASITEKYQPLVGGYSFFQSFWTSLWTATVTVLVALLVAFPFCYFLSQSKNKVFRSFVIALATAPIWSSFLIKLIGLKTLLDLVLGLALNRVGDNNLTFGSGYTLIGMIYLFTPFMFLPLYNNFCILPKNLILASQDLGYNWITSFIKVVIPFSKTAILSGIALTFFPSLTSVAIAQFLDNSNQNNTLGNYVFTLGNNGYDSAIERGRASGAIIIAALITFAFYFVVIFAPRIVRLIQTKCLKYRRVNV</sequence>
<comment type="function">
    <text evidence="1">Required for the activity of the bacterial transport system of putrescine and spermidine.</text>
</comment>
<comment type="subcellular location">
    <subcellularLocation>
        <location evidence="3">Cell membrane</location>
        <topology evidence="2">Multi-pass membrane protein</topology>
    </subcellularLocation>
</comment>
<comment type="similarity">
    <text evidence="3">Belongs to the binding-protein-dependent transport system permease family. CysTW subfamily.</text>
</comment>
<keyword id="KW-1003">Cell membrane</keyword>
<keyword id="KW-0472">Membrane</keyword>
<keyword id="KW-1185">Reference proteome</keyword>
<keyword id="KW-0812">Transmembrane</keyword>
<keyword id="KW-1133">Transmembrane helix</keyword>
<keyword id="KW-0813">Transport</keyword>
<protein>
    <recommendedName>
        <fullName>Spermidine/putrescine transport system permease protein PotB homolog</fullName>
    </recommendedName>
</protein>
<proteinExistence type="inferred from homology"/>
<accession>P75058</accession>
<organism>
    <name type="scientific">Mycoplasma pneumoniae (strain ATCC 29342 / M129 / Subtype 1)</name>
    <name type="common">Mycoplasmoides pneumoniae</name>
    <dbReference type="NCBI Taxonomy" id="272634"/>
    <lineage>
        <taxon>Bacteria</taxon>
        <taxon>Bacillati</taxon>
        <taxon>Mycoplasmatota</taxon>
        <taxon>Mycoplasmoidales</taxon>
        <taxon>Mycoplasmoidaceae</taxon>
        <taxon>Mycoplasmoides</taxon>
    </lineage>
</organism>
<name>POTB_MYCPN</name>
<reference key="1">
    <citation type="journal article" date="1996" name="Nucleic Acids Res.">
        <title>Complete sequence analysis of the genome of the bacterium Mycoplasma pneumoniae.</title>
        <authorList>
            <person name="Himmelreich R."/>
            <person name="Hilbert H."/>
            <person name="Plagens H."/>
            <person name="Pirkl E."/>
            <person name="Li B.-C."/>
            <person name="Herrmann R."/>
        </authorList>
    </citation>
    <scope>NUCLEOTIDE SEQUENCE [LARGE SCALE GENOMIC DNA]</scope>
    <source>
        <strain>ATCC 29342 / M129 / Subtype 1</strain>
    </source>
</reference>